<dbReference type="EMBL" id="U18997">
    <property type="protein sequence ID" value="AAA58149.1"/>
    <property type="molecule type" value="Genomic_DNA"/>
</dbReference>
<dbReference type="EMBL" id="U00096">
    <property type="protein sequence ID" value="AAC76377.1"/>
    <property type="molecule type" value="Genomic_DNA"/>
</dbReference>
<dbReference type="EMBL" id="AP009048">
    <property type="protein sequence ID" value="BAE77938.1"/>
    <property type="molecule type" value="Genomic_DNA"/>
</dbReference>
<dbReference type="PIR" id="C65129">
    <property type="entry name" value="C65129"/>
</dbReference>
<dbReference type="RefSeq" id="NP_417811.1">
    <property type="nucleotide sequence ID" value="NC_000913.3"/>
</dbReference>
<dbReference type="RefSeq" id="WP_000634798.1">
    <property type="nucleotide sequence ID" value="NZ_SSZK01000008.1"/>
</dbReference>
<dbReference type="SMR" id="P63389"/>
<dbReference type="BioGRID" id="4260997">
    <property type="interactions" value="23"/>
</dbReference>
<dbReference type="BioGRID" id="852167">
    <property type="interactions" value="6"/>
</dbReference>
<dbReference type="DIP" id="DIP-48200N"/>
<dbReference type="FunCoup" id="P63389">
    <property type="interactions" value="678"/>
</dbReference>
<dbReference type="IntAct" id="P63389">
    <property type="interactions" value="11"/>
</dbReference>
<dbReference type="STRING" id="511145.b3352"/>
<dbReference type="jPOST" id="P63389"/>
<dbReference type="PaxDb" id="511145-b3352"/>
<dbReference type="EnsemblBacteria" id="AAC76377">
    <property type="protein sequence ID" value="AAC76377"/>
    <property type="gene ID" value="b3352"/>
</dbReference>
<dbReference type="GeneID" id="947856"/>
<dbReference type="KEGG" id="ecj:JW3315"/>
<dbReference type="KEGG" id="eco:b3352"/>
<dbReference type="KEGG" id="ecoc:C3026_18205"/>
<dbReference type="PATRIC" id="fig|1411691.4.peg.3378"/>
<dbReference type="EchoBASE" id="EB2740"/>
<dbReference type="eggNOG" id="COG0488">
    <property type="taxonomic scope" value="Bacteria"/>
</dbReference>
<dbReference type="HOGENOM" id="CLU_000604_36_0_6"/>
<dbReference type="InParanoid" id="P63389"/>
<dbReference type="OMA" id="CTHIADI"/>
<dbReference type="OrthoDB" id="9762051at2"/>
<dbReference type="PhylomeDB" id="P63389"/>
<dbReference type="BioCyc" id="EcoCyc:YHES-MONOMER"/>
<dbReference type="PRO" id="PR:P63389"/>
<dbReference type="Proteomes" id="UP000000625">
    <property type="component" value="Chromosome"/>
</dbReference>
<dbReference type="GO" id="GO:0005524">
    <property type="term" value="F:ATP binding"/>
    <property type="evidence" value="ECO:0000255"/>
    <property type="project" value="EcoCyc"/>
</dbReference>
<dbReference type="GO" id="GO:0016887">
    <property type="term" value="F:ATP hydrolysis activity"/>
    <property type="evidence" value="ECO:0007669"/>
    <property type="project" value="InterPro"/>
</dbReference>
<dbReference type="CDD" id="cd03221">
    <property type="entry name" value="ABCF_EF-3"/>
    <property type="match status" value="2"/>
</dbReference>
<dbReference type="FunFam" id="3.40.50.300:FF:002053">
    <property type="entry name" value="ABC transporter ATP-binding protein"/>
    <property type="match status" value="1"/>
</dbReference>
<dbReference type="FunFam" id="3.40.50.300:FF:000011">
    <property type="entry name" value="Putative ABC transporter ATP-binding component"/>
    <property type="match status" value="1"/>
</dbReference>
<dbReference type="Gene3D" id="3.40.50.300">
    <property type="entry name" value="P-loop containing nucleotide triphosphate hydrolases"/>
    <property type="match status" value="2"/>
</dbReference>
<dbReference type="InterPro" id="IPR003593">
    <property type="entry name" value="AAA+_ATPase"/>
</dbReference>
<dbReference type="InterPro" id="IPR032781">
    <property type="entry name" value="ABC_tran_Xtn"/>
</dbReference>
<dbReference type="InterPro" id="IPR003439">
    <property type="entry name" value="ABC_transporter-like_ATP-bd"/>
</dbReference>
<dbReference type="InterPro" id="IPR017871">
    <property type="entry name" value="ABC_transporter-like_CS"/>
</dbReference>
<dbReference type="InterPro" id="IPR050611">
    <property type="entry name" value="ABCF_EF3_subfamily"/>
</dbReference>
<dbReference type="InterPro" id="IPR027417">
    <property type="entry name" value="P-loop_NTPase"/>
</dbReference>
<dbReference type="NCBIfam" id="NF007921">
    <property type="entry name" value="PRK10636.1"/>
    <property type="match status" value="1"/>
</dbReference>
<dbReference type="PANTHER" id="PTHR19211:SF14">
    <property type="entry name" value="ATP-BINDING CASSETTE SUB-FAMILY F MEMBER 1"/>
    <property type="match status" value="1"/>
</dbReference>
<dbReference type="PANTHER" id="PTHR19211">
    <property type="entry name" value="ATP-BINDING TRANSPORT PROTEIN-RELATED"/>
    <property type="match status" value="1"/>
</dbReference>
<dbReference type="Pfam" id="PF00005">
    <property type="entry name" value="ABC_tran"/>
    <property type="match status" value="2"/>
</dbReference>
<dbReference type="Pfam" id="PF12848">
    <property type="entry name" value="ABC_tran_Xtn"/>
    <property type="match status" value="1"/>
</dbReference>
<dbReference type="SMART" id="SM00382">
    <property type="entry name" value="AAA"/>
    <property type="match status" value="2"/>
</dbReference>
<dbReference type="SUPFAM" id="SSF52540">
    <property type="entry name" value="P-loop containing nucleoside triphosphate hydrolases"/>
    <property type="match status" value="2"/>
</dbReference>
<dbReference type="PROSITE" id="PS00211">
    <property type="entry name" value="ABC_TRANSPORTER_1"/>
    <property type="match status" value="2"/>
</dbReference>
<dbReference type="PROSITE" id="PS50893">
    <property type="entry name" value="ABC_TRANSPORTER_2"/>
    <property type="match status" value="2"/>
</dbReference>
<keyword id="KW-0067">ATP-binding</keyword>
<keyword id="KW-0547">Nucleotide-binding</keyword>
<keyword id="KW-1185">Reference proteome</keyword>
<keyword id="KW-0677">Repeat</keyword>
<reference key="1">
    <citation type="journal article" date="1997" name="Science">
        <title>The complete genome sequence of Escherichia coli K-12.</title>
        <authorList>
            <person name="Blattner F.R."/>
            <person name="Plunkett G. III"/>
            <person name="Bloch C.A."/>
            <person name="Perna N.T."/>
            <person name="Burland V."/>
            <person name="Riley M."/>
            <person name="Collado-Vides J."/>
            <person name="Glasner J.D."/>
            <person name="Rode C.K."/>
            <person name="Mayhew G.F."/>
            <person name="Gregor J."/>
            <person name="Davis N.W."/>
            <person name="Kirkpatrick H.A."/>
            <person name="Goeden M.A."/>
            <person name="Rose D.J."/>
            <person name="Mau B."/>
            <person name="Shao Y."/>
        </authorList>
    </citation>
    <scope>NUCLEOTIDE SEQUENCE [LARGE SCALE GENOMIC DNA]</scope>
    <source>
        <strain>K12 / MG1655 / ATCC 47076</strain>
    </source>
</reference>
<reference key="2">
    <citation type="journal article" date="2006" name="Mol. Syst. Biol.">
        <title>Highly accurate genome sequences of Escherichia coli K-12 strains MG1655 and W3110.</title>
        <authorList>
            <person name="Hayashi K."/>
            <person name="Morooka N."/>
            <person name="Yamamoto Y."/>
            <person name="Fujita K."/>
            <person name="Isono K."/>
            <person name="Choi S."/>
            <person name="Ohtsubo E."/>
            <person name="Baba T."/>
            <person name="Wanner B.L."/>
            <person name="Mori H."/>
            <person name="Horiuchi T."/>
        </authorList>
    </citation>
    <scope>NUCLEOTIDE SEQUENCE [LARGE SCALE GENOMIC DNA]</scope>
    <source>
        <strain>K12 / W3110 / ATCC 27325 / DSM 5911</strain>
    </source>
</reference>
<reference key="3">
    <citation type="journal article" date="2019" name="J. Mol. Biol.">
        <title>ABCF ATPases involved in protein synthesis, ribosome assembly and antibiotic resistance: structural and functional diversification across the tree of life.</title>
        <authorList>
            <person name="Murina V."/>
            <person name="Kasari M."/>
            <person name="Takada H."/>
            <person name="Hinnu M."/>
            <person name="Saha C.K."/>
            <person name="Grimshaw J.W."/>
            <person name="Seki T."/>
            <person name="Reith M."/>
            <person name="Putrins M."/>
            <person name="Tenson T."/>
            <person name="Strahl H."/>
            <person name="Hauryliuk V."/>
            <person name="Atkinson G.C."/>
        </authorList>
    </citation>
    <scope>FAMILY</scope>
    <scope>MUTAGENESIS OF GLU-175 AND GLU-456</scope>
    <source>
        <strain>K12 / BW25113</strain>
    </source>
</reference>
<accession>P63389</accession>
<accession>P45535</accession>
<accession>Q2M718</accession>
<organism>
    <name type="scientific">Escherichia coli (strain K12)</name>
    <dbReference type="NCBI Taxonomy" id="83333"/>
    <lineage>
        <taxon>Bacteria</taxon>
        <taxon>Pseudomonadati</taxon>
        <taxon>Pseudomonadota</taxon>
        <taxon>Gammaproteobacteria</taxon>
        <taxon>Enterobacterales</taxon>
        <taxon>Enterobacteriaceae</taxon>
        <taxon>Escherichia</taxon>
    </lineage>
</organism>
<evidence type="ECO:0000255" key="1">
    <source>
        <dbReference type="PROSITE-ProRule" id="PRU00434"/>
    </source>
</evidence>
<evidence type="ECO:0000256" key="2">
    <source>
        <dbReference type="SAM" id="MobiDB-lite"/>
    </source>
</evidence>
<evidence type="ECO:0000269" key="3">
    <source>
    </source>
</evidence>
<evidence type="ECO:0000303" key="4">
    <source>
    </source>
</evidence>
<evidence type="ECO:0000305" key="5">
    <source>
    </source>
</evidence>
<protein>
    <recommendedName>
        <fullName>Probable ATP-binding protein YheS</fullName>
    </recommendedName>
</protein>
<proteinExistence type="evidence at protein level"/>
<comment type="function">
    <text evidence="5">Genetic data indicate it may be involved in ribosome assembly or function.</text>
</comment>
<comment type="interaction">
    <interactant intactId="EBI-561198">
        <id>P63389</id>
    </interactant>
    <interactant intactId="EBI-543523">
        <id>P0AFG3</id>
        <label>sucA</label>
    </interactant>
    <organismsDiffer>false</organismsDiffer>
    <experiments>3</experiments>
</comment>
<comment type="interaction">
    <interactant intactId="EBI-561198">
        <id>P63389</id>
    </interactant>
    <interactant intactId="EBI-301077">
        <id>P0CE47</id>
        <label>tufA</label>
    </interactant>
    <organismsDiffer>false</organismsDiffer>
    <experiments>3</experiments>
</comment>
<comment type="similarity">
    <text evidence="4">Belongs to the ABC transporter superfamily. ABCF family. YheS subfamily.</text>
</comment>
<sequence>MIVFSSLQIRRGVRVLLDNATATINPGQKVGLVGKNGCGKSTLLALLKNEISADGGSYTFPGSWQLAWVNQETPALPQAALEYVIDGDREYRQLEAQLHDANERNDGHAIATIHGKLDAIDAWSIRSRAASLLHGLGFSNEQLERPVSDFSGGWRMRLNLAQALICRSDLLLLDEPTNHLDLDAVIWLEKWLKSYQGTLILISHDRDFLDPIVDKIIHIEQQSMFEYTGNYSSFEVQRATRLAQQQAMYESQQERVAHLQSYIDRFRAKATKAKQAQSRIKMLERMELIAPAHVDNPFRFSFRAPESLPNPLLKMEKVSAGYGDRIILDSIKLNLVPGSRIGLLGRNGAGKSTLIKLLAGELAPVSGEIGLAKGIKLGYFAQHQLEYLRADESPIQHLARLAPQELEQKLRDYLGGFGFQGDKVTEETRRFSGGEKARLVLALIVWQRPNLLLLDEPTNHLDLDMRQALTEALIEFEGALVVVSHDRHLLRSTTDDLYLVHDRKVEPFDGDLEDYQQWLSDVQKQENQTDEAPKENANSAQARKDQKRREAELRAQTQPLRKEIARLEKEMEKLNAQLAQAEEKLGDSELYDQSRKAELTACLQQQASAKSGLEECEMAWLEAQEQLEQMLLEGQSN</sequence>
<feature type="chain" id="PRO_0000093187" description="Probable ATP-binding protein YheS">
    <location>
        <begin position="1"/>
        <end position="637"/>
    </location>
</feature>
<feature type="domain" description="ABC transporter 1" evidence="1">
    <location>
        <begin position="2"/>
        <end position="246"/>
    </location>
</feature>
<feature type="domain" description="ABC transporter 2" evidence="1">
    <location>
        <begin position="313"/>
        <end position="527"/>
    </location>
</feature>
<feature type="region of interest" description="Disordered" evidence="2">
    <location>
        <begin position="523"/>
        <end position="559"/>
    </location>
</feature>
<feature type="compositionally biased region" description="Basic and acidic residues" evidence="2">
    <location>
        <begin position="542"/>
        <end position="553"/>
    </location>
</feature>
<feature type="binding site" evidence="1">
    <location>
        <begin position="34"/>
        <end position="41"/>
    </location>
    <ligand>
        <name>ATP</name>
        <dbReference type="ChEBI" id="CHEBI:30616"/>
        <label>1</label>
    </ligand>
</feature>
<feature type="binding site" evidence="1">
    <location>
        <begin position="345"/>
        <end position="352"/>
    </location>
    <ligand>
        <name>ATP</name>
        <dbReference type="ChEBI" id="CHEBI:30616"/>
        <label>2</label>
    </ligand>
</feature>
<feature type="mutagenesis site" description="Causes growth defect at 37 degrees Celsius, 7-fold decrease in translation; when associated with Q-456 (called EQ2)." evidence="3">
    <original>E</original>
    <variation>Q</variation>
    <location>
        <position position="175"/>
    </location>
</feature>
<feature type="mutagenesis site" description="Causes growth defect at 37 degrees Celsius, 7-fold decrease in translation; when associated with Q-175 (EQ2)." evidence="3">
    <original>E</original>
    <variation>Q</variation>
    <location>
        <position position="456"/>
    </location>
</feature>
<gene>
    <name type="primary">yheS</name>
    <name type="ordered locus">b3352</name>
    <name type="ordered locus">JW3315</name>
</gene>
<name>YHES_ECOLI</name>